<reference key="1">
    <citation type="submission" date="2008-05" db="EMBL/GenBank/DDBJ databases">
        <title>Complete sequence of chromosome 1 of Ralstonia pickettii 12J.</title>
        <authorList>
            <person name="Lucas S."/>
            <person name="Copeland A."/>
            <person name="Lapidus A."/>
            <person name="Glavina del Rio T."/>
            <person name="Dalin E."/>
            <person name="Tice H."/>
            <person name="Bruce D."/>
            <person name="Goodwin L."/>
            <person name="Pitluck S."/>
            <person name="Meincke L."/>
            <person name="Brettin T."/>
            <person name="Detter J.C."/>
            <person name="Han C."/>
            <person name="Kuske C.R."/>
            <person name="Schmutz J."/>
            <person name="Larimer F."/>
            <person name="Land M."/>
            <person name="Hauser L."/>
            <person name="Kyrpides N."/>
            <person name="Mikhailova N."/>
            <person name="Marsh T."/>
            <person name="Richardson P."/>
        </authorList>
    </citation>
    <scope>NUCLEOTIDE SEQUENCE [LARGE SCALE GENOMIC DNA]</scope>
    <source>
        <strain>12J</strain>
    </source>
</reference>
<keyword id="KW-0414">Isoprene biosynthesis</keyword>
<keyword id="KW-0456">Lyase</keyword>
<keyword id="KW-0479">Metal-binding</keyword>
<protein>
    <recommendedName>
        <fullName evidence="1">2-C-methyl-D-erythritol 2,4-cyclodiphosphate synthase</fullName>
        <shortName evidence="1">MECDP-synthase</shortName>
        <shortName evidence="1">MECPP-synthase</shortName>
        <shortName evidence="1">MECPS</shortName>
        <ecNumber evidence="1">4.6.1.12</ecNumber>
    </recommendedName>
</protein>
<dbReference type="EC" id="4.6.1.12" evidence="1"/>
<dbReference type="EMBL" id="CP001068">
    <property type="protein sequence ID" value="ACD27037.1"/>
    <property type="molecule type" value="Genomic_DNA"/>
</dbReference>
<dbReference type="SMR" id="B2UFT6"/>
<dbReference type="STRING" id="402626.Rpic_1902"/>
<dbReference type="KEGG" id="rpi:Rpic_1902"/>
<dbReference type="PATRIC" id="fig|402626.5.peg.3054"/>
<dbReference type="eggNOG" id="COG0245">
    <property type="taxonomic scope" value="Bacteria"/>
</dbReference>
<dbReference type="HOGENOM" id="CLU_084630_2_0_4"/>
<dbReference type="UniPathway" id="UPA00056">
    <property type="reaction ID" value="UER00095"/>
</dbReference>
<dbReference type="GO" id="GO:0008685">
    <property type="term" value="F:2-C-methyl-D-erythritol 2,4-cyclodiphosphate synthase activity"/>
    <property type="evidence" value="ECO:0007669"/>
    <property type="project" value="UniProtKB-UniRule"/>
</dbReference>
<dbReference type="GO" id="GO:0046872">
    <property type="term" value="F:metal ion binding"/>
    <property type="evidence" value="ECO:0007669"/>
    <property type="project" value="UniProtKB-KW"/>
</dbReference>
<dbReference type="GO" id="GO:0019288">
    <property type="term" value="P:isopentenyl diphosphate biosynthetic process, methylerythritol 4-phosphate pathway"/>
    <property type="evidence" value="ECO:0007669"/>
    <property type="project" value="UniProtKB-UniRule"/>
</dbReference>
<dbReference type="GO" id="GO:0016114">
    <property type="term" value="P:terpenoid biosynthetic process"/>
    <property type="evidence" value="ECO:0007669"/>
    <property type="project" value="InterPro"/>
</dbReference>
<dbReference type="CDD" id="cd00554">
    <property type="entry name" value="MECDP_synthase"/>
    <property type="match status" value="1"/>
</dbReference>
<dbReference type="FunFam" id="3.30.1330.50:FF:000001">
    <property type="entry name" value="2-C-methyl-D-erythritol 2,4-cyclodiphosphate synthase"/>
    <property type="match status" value="1"/>
</dbReference>
<dbReference type="Gene3D" id="3.30.1330.50">
    <property type="entry name" value="2-C-methyl-D-erythritol 2,4-cyclodiphosphate synthase"/>
    <property type="match status" value="1"/>
</dbReference>
<dbReference type="HAMAP" id="MF_00107">
    <property type="entry name" value="IspF"/>
    <property type="match status" value="1"/>
</dbReference>
<dbReference type="InterPro" id="IPR003526">
    <property type="entry name" value="MECDP_synthase"/>
</dbReference>
<dbReference type="InterPro" id="IPR020555">
    <property type="entry name" value="MECDP_synthase_CS"/>
</dbReference>
<dbReference type="InterPro" id="IPR036571">
    <property type="entry name" value="MECDP_synthase_sf"/>
</dbReference>
<dbReference type="NCBIfam" id="TIGR00151">
    <property type="entry name" value="ispF"/>
    <property type="match status" value="1"/>
</dbReference>
<dbReference type="PANTHER" id="PTHR43181">
    <property type="entry name" value="2-C-METHYL-D-ERYTHRITOL 2,4-CYCLODIPHOSPHATE SYNTHASE, CHLOROPLASTIC"/>
    <property type="match status" value="1"/>
</dbReference>
<dbReference type="PANTHER" id="PTHR43181:SF1">
    <property type="entry name" value="2-C-METHYL-D-ERYTHRITOL 2,4-CYCLODIPHOSPHATE SYNTHASE, CHLOROPLASTIC"/>
    <property type="match status" value="1"/>
</dbReference>
<dbReference type="Pfam" id="PF02542">
    <property type="entry name" value="YgbB"/>
    <property type="match status" value="1"/>
</dbReference>
<dbReference type="SUPFAM" id="SSF69765">
    <property type="entry name" value="IpsF-like"/>
    <property type="match status" value="1"/>
</dbReference>
<dbReference type="PROSITE" id="PS01350">
    <property type="entry name" value="ISPF"/>
    <property type="match status" value="1"/>
</dbReference>
<feature type="chain" id="PRO_1000094282" description="2-C-methyl-D-erythritol 2,4-cyclodiphosphate synthase">
    <location>
        <begin position="1"/>
        <end position="168"/>
    </location>
</feature>
<feature type="binding site" evidence="1">
    <location>
        <begin position="13"/>
        <end position="15"/>
    </location>
    <ligand>
        <name>4-CDP-2-C-methyl-D-erythritol 2-phosphate</name>
        <dbReference type="ChEBI" id="CHEBI:57919"/>
    </ligand>
</feature>
<feature type="binding site" evidence="1">
    <location>
        <position position="13"/>
    </location>
    <ligand>
        <name>a divalent metal cation</name>
        <dbReference type="ChEBI" id="CHEBI:60240"/>
    </ligand>
</feature>
<feature type="binding site" evidence="1">
    <location>
        <position position="15"/>
    </location>
    <ligand>
        <name>a divalent metal cation</name>
        <dbReference type="ChEBI" id="CHEBI:60240"/>
    </ligand>
</feature>
<feature type="binding site" evidence="1">
    <location>
        <begin position="39"/>
        <end position="40"/>
    </location>
    <ligand>
        <name>4-CDP-2-C-methyl-D-erythritol 2-phosphate</name>
        <dbReference type="ChEBI" id="CHEBI:57919"/>
    </ligand>
</feature>
<feature type="binding site" evidence="1">
    <location>
        <position position="47"/>
    </location>
    <ligand>
        <name>a divalent metal cation</name>
        <dbReference type="ChEBI" id="CHEBI:60240"/>
    </ligand>
</feature>
<feature type="binding site" evidence="1">
    <location>
        <begin position="61"/>
        <end position="63"/>
    </location>
    <ligand>
        <name>4-CDP-2-C-methyl-D-erythritol 2-phosphate</name>
        <dbReference type="ChEBI" id="CHEBI:57919"/>
    </ligand>
</feature>
<feature type="binding site" evidence="1">
    <location>
        <begin position="66"/>
        <end position="70"/>
    </location>
    <ligand>
        <name>4-CDP-2-C-methyl-D-erythritol 2-phosphate</name>
        <dbReference type="ChEBI" id="CHEBI:57919"/>
    </ligand>
</feature>
<feature type="binding site" evidence="1">
    <location>
        <position position="144"/>
    </location>
    <ligand>
        <name>4-CDP-2-C-methyl-D-erythritol 2-phosphate</name>
        <dbReference type="ChEBI" id="CHEBI:57919"/>
    </ligand>
</feature>
<feature type="binding site" evidence="1">
    <location>
        <position position="147"/>
    </location>
    <ligand>
        <name>4-CDP-2-C-methyl-D-erythritol 2-phosphate</name>
        <dbReference type="ChEBI" id="CHEBI:57919"/>
    </ligand>
</feature>
<feature type="site" description="Transition state stabilizer" evidence="1">
    <location>
        <position position="39"/>
    </location>
</feature>
<feature type="site" description="Transition state stabilizer" evidence="1">
    <location>
        <position position="138"/>
    </location>
</feature>
<gene>
    <name evidence="1" type="primary">ispF</name>
    <name type="ordered locus">Rpic_1902</name>
</gene>
<name>ISPF_RALPJ</name>
<organism>
    <name type="scientific">Ralstonia pickettii (strain 12J)</name>
    <dbReference type="NCBI Taxonomy" id="402626"/>
    <lineage>
        <taxon>Bacteria</taxon>
        <taxon>Pseudomonadati</taxon>
        <taxon>Pseudomonadota</taxon>
        <taxon>Betaproteobacteria</taxon>
        <taxon>Burkholderiales</taxon>
        <taxon>Burkholderiaceae</taxon>
        <taxon>Ralstonia</taxon>
    </lineage>
</organism>
<accession>B2UFT6</accession>
<sequence length="168" mass="17860">MNWMDIRIGQGYDVHALVEGRKLILGGVEIPHTRGLLGHSDADALLHAITDALFGAAGLGDIGRHFPDTDPAFAGADSRVLLREAVRRVHKAGYAVGNVDATVIAQKPKLAPHVPGMVANLAEDLGIAPERCNVKAKTNEKLGFEGKEEGIVAQAVVLIYRAEAAEQD</sequence>
<proteinExistence type="inferred from homology"/>
<comment type="function">
    <text evidence="1">Involved in the biosynthesis of isopentenyl diphosphate (IPP) and dimethylallyl diphosphate (DMAPP), two major building blocks of isoprenoid compounds. Catalyzes the conversion of 4-diphosphocytidyl-2-C-methyl-D-erythritol 2-phosphate (CDP-ME2P) to 2-C-methyl-D-erythritol 2,4-cyclodiphosphate (ME-CPP) with a corresponding release of cytidine 5-monophosphate (CMP).</text>
</comment>
<comment type="catalytic activity">
    <reaction evidence="1">
        <text>4-CDP-2-C-methyl-D-erythritol 2-phosphate = 2-C-methyl-D-erythritol 2,4-cyclic diphosphate + CMP</text>
        <dbReference type="Rhea" id="RHEA:23864"/>
        <dbReference type="ChEBI" id="CHEBI:57919"/>
        <dbReference type="ChEBI" id="CHEBI:58483"/>
        <dbReference type="ChEBI" id="CHEBI:60377"/>
        <dbReference type="EC" id="4.6.1.12"/>
    </reaction>
</comment>
<comment type="cofactor">
    <cofactor evidence="1">
        <name>a divalent metal cation</name>
        <dbReference type="ChEBI" id="CHEBI:60240"/>
    </cofactor>
    <text evidence="1">Binds 1 divalent metal cation per subunit.</text>
</comment>
<comment type="pathway">
    <text evidence="1">Isoprenoid biosynthesis; isopentenyl diphosphate biosynthesis via DXP pathway; isopentenyl diphosphate from 1-deoxy-D-xylulose 5-phosphate: step 4/6.</text>
</comment>
<comment type="subunit">
    <text evidence="1">Homotrimer.</text>
</comment>
<comment type="similarity">
    <text evidence="1">Belongs to the IspF family.</text>
</comment>
<evidence type="ECO:0000255" key="1">
    <source>
        <dbReference type="HAMAP-Rule" id="MF_00107"/>
    </source>
</evidence>